<keyword id="KW-0028">Amino-acid biosynthesis</keyword>
<keyword id="KW-0055">Arginine biosynthesis</keyword>
<keyword id="KW-0067">ATP-binding</keyword>
<keyword id="KW-0963">Cytoplasm</keyword>
<keyword id="KW-0436">Ligase</keyword>
<keyword id="KW-0547">Nucleotide-binding</keyword>
<keyword id="KW-1185">Reference proteome</keyword>
<name>ASSY_POLAQ</name>
<organism>
    <name type="scientific">Polynucleobacter asymbioticus (strain DSM 18221 / CIP 109841 / QLW-P1DMWA-1)</name>
    <name type="common">Polynucleobacter necessarius subsp. asymbioticus</name>
    <dbReference type="NCBI Taxonomy" id="312153"/>
    <lineage>
        <taxon>Bacteria</taxon>
        <taxon>Pseudomonadati</taxon>
        <taxon>Pseudomonadota</taxon>
        <taxon>Betaproteobacteria</taxon>
        <taxon>Burkholderiales</taxon>
        <taxon>Burkholderiaceae</taxon>
        <taxon>Polynucleobacter</taxon>
    </lineage>
</organism>
<sequence>MSDIKKAVLAYSGGLDTSVILKWLQDTYGCEIVTFTADLGQGEELEPARAKALQFGIKPENIFIDDLREEFVRDFVFPMFRANTIYEGEYLLGTSIARPLIAKRQIEIARLTGADAVSHGATGKGNDQVRFELGYYALEPGIKVIAPWREWDLLSREKLMAYAEKHGIPVEMKHKQGGSPYSMDANLLHISYEGRHLENPNAEAEESMWRWTVSPEKAPDAPEIIEIEFRAGDPVAIDGKAYKPHELLAELNRIGGKHGIGRLDLVENRFVGMKSRGCYETPGGTILLKAHRGIESITLDREVAHLKDDLMPRYASLIYNGLWWAPERLALQTLIDHTQQAVNGVVRLKLYKGSVSVISRDSANTLFDQNIATFDDDGGAYNQADAGGFIKLNALRMRIAETAKRKRAQK</sequence>
<feature type="chain" id="PRO_1000073824" description="Argininosuccinate synthase">
    <location>
        <begin position="1"/>
        <end position="410"/>
    </location>
</feature>
<feature type="binding site" evidence="1">
    <location>
        <begin position="10"/>
        <end position="18"/>
    </location>
    <ligand>
        <name>ATP</name>
        <dbReference type="ChEBI" id="CHEBI:30616"/>
    </ligand>
</feature>
<feature type="binding site" evidence="1">
    <location>
        <position position="37"/>
    </location>
    <ligand>
        <name>ATP</name>
        <dbReference type="ChEBI" id="CHEBI:30616"/>
    </ligand>
</feature>
<feature type="binding site" evidence="1">
    <location>
        <position position="90"/>
    </location>
    <ligand>
        <name>L-citrulline</name>
        <dbReference type="ChEBI" id="CHEBI:57743"/>
    </ligand>
</feature>
<feature type="binding site" evidence="1">
    <location>
        <position position="95"/>
    </location>
    <ligand>
        <name>L-citrulline</name>
        <dbReference type="ChEBI" id="CHEBI:57743"/>
    </ligand>
</feature>
<feature type="binding site" evidence="1">
    <location>
        <position position="120"/>
    </location>
    <ligand>
        <name>ATP</name>
        <dbReference type="ChEBI" id="CHEBI:30616"/>
    </ligand>
</feature>
<feature type="binding site" evidence="1">
    <location>
        <position position="122"/>
    </location>
    <ligand>
        <name>L-aspartate</name>
        <dbReference type="ChEBI" id="CHEBI:29991"/>
    </ligand>
</feature>
<feature type="binding site" evidence="1">
    <location>
        <position position="126"/>
    </location>
    <ligand>
        <name>L-aspartate</name>
        <dbReference type="ChEBI" id="CHEBI:29991"/>
    </ligand>
</feature>
<feature type="binding site" evidence="1">
    <location>
        <position position="126"/>
    </location>
    <ligand>
        <name>L-citrulline</name>
        <dbReference type="ChEBI" id="CHEBI:57743"/>
    </ligand>
</feature>
<feature type="binding site" evidence="1">
    <location>
        <position position="127"/>
    </location>
    <ligand>
        <name>L-aspartate</name>
        <dbReference type="ChEBI" id="CHEBI:29991"/>
    </ligand>
</feature>
<feature type="binding site" evidence="1">
    <location>
        <position position="130"/>
    </location>
    <ligand>
        <name>L-citrulline</name>
        <dbReference type="ChEBI" id="CHEBI:57743"/>
    </ligand>
</feature>
<feature type="binding site" evidence="1">
    <location>
        <position position="182"/>
    </location>
    <ligand>
        <name>L-citrulline</name>
        <dbReference type="ChEBI" id="CHEBI:57743"/>
    </ligand>
</feature>
<feature type="binding site" evidence="1">
    <location>
        <position position="191"/>
    </location>
    <ligand>
        <name>L-citrulline</name>
        <dbReference type="ChEBI" id="CHEBI:57743"/>
    </ligand>
</feature>
<feature type="binding site" evidence="1">
    <location>
        <position position="267"/>
    </location>
    <ligand>
        <name>L-citrulline</name>
        <dbReference type="ChEBI" id="CHEBI:57743"/>
    </ligand>
</feature>
<feature type="binding site" evidence="1">
    <location>
        <position position="279"/>
    </location>
    <ligand>
        <name>L-citrulline</name>
        <dbReference type="ChEBI" id="CHEBI:57743"/>
    </ligand>
</feature>
<comment type="catalytic activity">
    <reaction evidence="1">
        <text>L-citrulline + L-aspartate + ATP = 2-(N(omega)-L-arginino)succinate + AMP + diphosphate + H(+)</text>
        <dbReference type="Rhea" id="RHEA:10932"/>
        <dbReference type="ChEBI" id="CHEBI:15378"/>
        <dbReference type="ChEBI" id="CHEBI:29991"/>
        <dbReference type="ChEBI" id="CHEBI:30616"/>
        <dbReference type="ChEBI" id="CHEBI:33019"/>
        <dbReference type="ChEBI" id="CHEBI:57472"/>
        <dbReference type="ChEBI" id="CHEBI:57743"/>
        <dbReference type="ChEBI" id="CHEBI:456215"/>
        <dbReference type="EC" id="6.3.4.5"/>
    </reaction>
</comment>
<comment type="pathway">
    <text evidence="1">Amino-acid biosynthesis; L-arginine biosynthesis; L-arginine from L-ornithine and carbamoyl phosphate: step 2/3.</text>
</comment>
<comment type="subunit">
    <text evidence="1">Homotetramer.</text>
</comment>
<comment type="subcellular location">
    <subcellularLocation>
        <location evidence="1">Cytoplasm</location>
    </subcellularLocation>
</comment>
<comment type="similarity">
    <text evidence="1">Belongs to the argininosuccinate synthase family. Type 1 subfamily.</text>
</comment>
<proteinExistence type="inferred from homology"/>
<evidence type="ECO:0000255" key="1">
    <source>
        <dbReference type="HAMAP-Rule" id="MF_00005"/>
    </source>
</evidence>
<protein>
    <recommendedName>
        <fullName evidence="1">Argininosuccinate synthase</fullName>
        <ecNumber evidence="1">6.3.4.5</ecNumber>
    </recommendedName>
    <alternativeName>
        <fullName evidence="1">Citrulline--aspartate ligase</fullName>
    </alternativeName>
</protein>
<gene>
    <name evidence="1" type="primary">argG</name>
    <name type="ordered locus">Pnuc_1753</name>
</gene>
<accession>A4SZQ2</accession>
<dbReference type="EC" id="6.3.4.5" evidence="1"/>
<dbReference type="EMBL" id="CP000655">
    <property type="protein sequence ID" value="ABP34966.1"/>
    <property type="molecule type" value="Genomic_DNA"/>
</dbReference>
<dbReference type="RefSeq" id="WP_011903589.1">
    <property type="nucleotide sequence ID" value="NC_009379.1"/>
</dbReference>
<dbReference type="SMR" id="A4SZQ2"/>
<dbReference type="GeneID" id="31482142"/>
<dbReference type="KEGG" id="pnu:Pnuc_1753"/>
<dbReference type="eggNOG" id="COG0137">
    <property type="taxonomic scope" value="Bacteria"/>
</dbReference>
<dbReference type="HOGENOM" id="CLU_032784_4_2_4"/>
<dbReference type="UniPathway" id="UPA00068">
    <property type="reaction ID" value="UER00113"/>
</dbReference>
<dbReference type="Proteomes" id="UP000000231">
    <property type="component" value="Chromosome"/>
</dbReference>
<dbReference type="GO" id="GO:0005737">
    <property type="term" value="C:cytoplasm"/>
    <property type="evidence" value="ECO:0007669"/>
    <property type="project" value="UniProtKB-SubCell"/>
</dbReference>
<dbReference type="GO" id="GO:0004055">
    <property type="term" value="F:argininosuccinate synthase activity"/>
    <property type="evidence" value="ECO:0007669"/>
    <property type="project" value="UniProtKB-UniRule"/>
</dbReference>
<dbReference type="GO" id="GO:0005524">
    <property type="term" value="F:ATP binding"/>
    <property type="evidence" value="ECO:0007669"/>
    <property type="project" value="UniProtKB-UniRule"/>
</dbReference>
<dbReference type="GO" id="GO:0000053">
    <property type="term" value="P:argininosuccinate metabolic process"/>
    <property type="evidence" value="ECO:0007669"/>
    <property type="project" value="TreeGrafter"/>
</dbReference>
<dbReference type="GO" id="GO:0006526">
    <property type="term" value="P:L-arginine biosynthetic process"/>
    <property type="evidence" value="ECO:0007669"/>
    <property type="project" value="UniProtKB-UniRule"/>
</dbReference>
<dbReference type="GO" id="GO:0000050">
    <property type="term" value="P:urea cycle"/>
    <property type="evidence" value="ECO:0007669"/>
    <property type="project" value="TreeGrafter"/>
</dbReference>
<dbReference type="CDD" id="cd01999">
    <property type="entry name" value="ASS"/>
    <property type="match status" value="1"/>
</dbReference>
<dbReference type="FunFam" id="1.20.5.470:FF:000001">
    <property type="entry name" value="Argininosuccinate synthase"/>
    <property type="match status" value="1"/>
</dbReference>
<dbReference type="FunFam" id="3.40.50.620:FF:000019">
    <property type="entry name" value="Argininosuccinate synthase"/>
    <property type="match status" value="1"/>
</dbReference>
<dbReference type="FunFam" id="3.90.1260.10:FF:000007">
    <property type="entry name" value="Argininosuccinate synthase"/>
    <property type="match status" value="1"/>
</dbReference>
<dbReference type="Gene3D" id="3.90.1260.10">
    <property type="entry name" value="Argininosuccinate synthetase, chain A, domain 2"/>
    <property type="match status" value="1"/>
</dbReference>
<dbReference type="Gene3D" id="3.40.50.620">
    <property type="entry name" value="HUPs"/>
    <property type="match status" value="1"/>
</dbReference>
<dbReference type="Gene3D" id="1.20.5.470">
    <property type="entry name" value="Single helix bin"/>
    <property type="match status" value="1"/>
</dbReference>
<dbReference type="HAMAP" id="MF_00005">
    <property type="entry name" value="Arg_succ_synth_type1"/>
    <property type="match status" value="1"/>
</dbReference>
<dbReference type="InterPro" id="IPR048268">
    <property type="entry name" value="Arginosuc_syn_C"/>
</dbReference>
<dbReference type="InterPro" id="IPR048267">
    <property type="entry name" value="Arginosuc_syn_N"/>
</dbReference>
<dbReference type="InterPro" id="IPR001518">
    <property type="entry name" value="Arginosuc_synth"/>
</dbReference>
<dbReference type="InterPro" id="IPR018223">
    <property type="entry name" value="Arginosuc_synth_CS"/>
</dbReference>
<dbReference type="InterPro" id="IPR023434">
    <property type="entry name" value="Arginosuc_synth_type_1_subfam"/>
</dbReference>
<dbReference type="InterPro" id="IPR024074">
    <property type="entry name" value="AS_cat/multimer_dom_body"/>
</dbReference>
<dbReference type="InterPro" id="IPR014729">
    <property type="entry name" value="Rossmann-like_a/b/a_fold"/>
</dbReference>
<dbReference type="NCBIfam" id="TIGR00032">
    <property type="entry name" value="argG"/>
    <property type="match status" value="1"/>
</dbReference>
<dbReference type="NCBIfam" id="NF001770">
    <property type="entry name" value="PRK00509.1"/>
    <property type="match status" value="1"/>
</dbReference>
<dbReference type="PANTHER" id="PTHR11587">
    <property type="entry name" value="ARGININOSUCCINATE SYNTHASE"/>
    <property type="match status" value="1"/>
</dbReference>
<dbReference type="PANTHER" id="PTHR11587:SF2">
    <property type="entry name" value="ARGININOSUCCINATE SYNTHASE"/>
    <property type="match status" value="1"/>
</dbReference>
<dbReference type="Pfam" id="PF20979">
    <property type="entry name" value="Arginosuc_syn_C"/>
    <property type="match status" value="1"/>
</dbReference>
<dbReference type="Pfam" id="PF00764">
    <property type="entry name" value="Arginosuc_synth"/>
    <property type="match status" value="1"/>
</dbReference>
<dbReference type="SUPFAM" id="SSF52402">
    <property type="entry name" value="Adenine nucleotide alpha hydrolases-like"/>
    <property type="match status" value="1"/>
</dbReference>
<dbReference type="SUPFAM" id="SSF69864">
    <property type="entry name" value="Argininosuccinate synthetase, C-terminal domain"/>
    <property type="match status" value="1"/>
</dbReference>
<dbReference type="PROSITE" id="PS00564">
    <property type="entry name" value="ARGININOSUCCIN_SYN_1"/>
    <property type="match status" value="1"/>
</dbReference>
<dbReference type="PROSITE" id="PS00565">
    <property type="entry name" value="ARGININOSUCCIN_SYN_2"/>
    <property type="match status" value="1"/>
</dbReference>
<reference key="1">
    <citation type="journal article" date="2012" name="Stand. Genomic Sci.">
        <title>Complete genome sequence of Polynucleobacter necessarius subsp. asymbioticus type strain (QLW-P1DMWA-1(T)).</title>
        <authorList>
            <person name="Meincke L."/>
            <person name="Copeland A."/>
            <person name="Lapidus A."/>
            <person name="Lucas S."/>
            <person name="Berry K.W."/>
            <person name="Del Rio T.G."/>
            <person name="Hammon N."/>
            <person name="Dalin E."/>
            <person name="Tice H."/>
            <person name="Pitluck S."/>
            <person name="Richardson P."/>
            <person name="Bruce D."/>
            <person name="Goodwin L."/>
            <person name="Han C."/>
            <person name="Tapia R."/>
            <person name="Detter J.C."/>
            <person name="Schmutz J."/>
            <person name="Brettin T."/>
            <person name="Larimer F."/>
            <person name="Land M."/>
            <person name="Hauser L."/>
            <person name="Kyrpides N.C."/>
            <person name="Ivanova N."/>
            <person name="Goker M."/>
            <person name="Woyke T."/>
            <person name="Wu Q.L."/>
            <person name="Pockl M."/>
            <person name="Hahn M.W."/>
            <person name="Klenk H.P."/>
        </authorList>
    </citation>
    <scope>NUCLEOTIDE SEQUENCE [LARGE SCALE GENOMIC DNA]</scope>
    <source>
        <strain>DSM 18221 / CIP 109841 / QLW-P1DMWA-1</strain>
    </source>
</reference>